<keyword id="KW-0143">Chaperone</keyword>
<keyword id="KW-0963">Cytoplasm</keyword>
<keyword id="KW-1185">Reference proteome</keyword>
<keyword id="KW-0690">Ribosome biogenesis</keyword>
<keyword id="KW-0698">rRNA processing</keyword>
<dbReference type="EMBL" id="CU928145">
    <property type="protein sequence ID" value="CAU98764.1"/>
    <property type="molecule type" value="Genomic_DNA"/>
</dbReference>
<dbReference type="RefSeq" id="WP_000043335.1">
    <property type="nucleotide sequence ID" value="NZ_CP028304.1"/>
</dbReference>
<dbReference type="SMR" id="B7LDJ7"/>
<dbReference type="GeneID" id="93774458"/>
<dbReference type="KEGG" id="eck:EC55989_2897"/>
<dbReference type="HOGENOM" id="CLU_077636_1_0_6"/>
<dbReference type="Proteomes" id="UP000000746">
    <property type="component" value="Chromosome"/>
</dbReference>
<dbReference type="GO" id="GO:0005737">
    <property type="term" value="C:cytoplasm"/>
    <property type="evidence" value="ECO:0007669"/>
    <property type="project" value="UniProtKB-SubCell"/>
</dbReference>
<dbReference type="GO" id="GO:0005840">
    <property type="term" value="C:ribosome"/>
    <property type="evidence" value="ECO:0007669"/>
    <property type="project" value="InterPro"/>
</dbReference>
<dbReference type="GO" id="GO:0043022">
    <property type="term" value="F:ribosome binding"/>
    <property type="evidence" value="ECO:0007669"/>
    <property type="project" value="InterPro"/>
</dbReference>
<dbReference type="GO" id="GO:0042274">
    <property type="term" value="P:ribosomal small subunit biogenesis"/>
    <property type="evidence" value="ECO:0007669"/>
    <property type="project" value="UniProtKB-UniRule"/>
</dbReference>
<dbReference type="GO" id="GO:0006364">
    <property type="term" value="P:rRNA processing"/>
    <property type="evidence" value="ECO:0007669"/>
    <property type="project" value="UniProtKB-UniRule"/>
</dbReference>
<dbReference type="FunFam" id="2.30.30.240:FF:000001">
    <property type="entry name" value="Ribosome maturation factor RimM"/>
    <property type="match status" value="1"/>
</dbReference>
<dbReference type="FunFam" id="2.40.30.60:FF:000001">
    <property type="entry name" value="Ribosome maturation factor RimM"/>
    <property type="match status" value="1"/>
</dbReference>
<dbReference type="Gene3D" id="2.30.30.240">
    <property type="entry name" value="PRC-barrel domain"/>
    <property type="match status" value="1"/>
</dbReference>
<dbReference type="Gene3D" id="2.40.30.60">
    <property type="entry name" value="RimM"/>
    <property type="match status" value="1"/>
</dbReference>
<dbReference type="HAMAP" id="MF_00014">
    <property type="entry name" value="Ribosome_mat_RimM"/>
    <property type="match status" value="1"/>
</dbReference>
<dbReference type="InterPro" id="IPR011033">
    <property type="entry name" value="PRC_barrel-like_sf"/>
</dbReference>
<dbReference type="InterPro" id="IPR056792">
    <property type="entry name" value="PRC_RimM"/>
</dbReference>
<dbReference type="InterPro" id="IPR011961">
    <property type="entry name" value="RimM"/>
</dbReference>
<dbReference type="InterPro" id="IPR002676">
    <property type="entry name" value="RimM_N"/>
</dbReference>
<dbReference type="InterPro" id="IPR036976">
    <property type="entry name" value="RimM_N_sf"/>
</dbReference>
<dbReference type="InterPro" id="IPR009000">
    <property type="entry name" value="Transl_B-barrel_sf"/>
</dbReference>
<dbReference type="NCBIfam" id="TIGR02273">
    <property type="entry name" value="16S_RimM"/>
    <property type="match status" value="1"/>
</dbReference>
<dbReference type="PANTHER" id="PTHR33692">
    <property type="entry name" value="RIBOSOME MATURATION FACTOR RIMM"/>
    <property type="match status" value="1"/>
</dbReference>
<dbReference type="PANTHER" id="PTHR33692:SF1">
    <property type="entry name" value="RIBOSOME MATURATION FACTOR RIMM"/>
    <property type="match status" value="1"/>
</dbReference>
<dbReference type="Pfam" id="PF24986">
    <property type="entry name" value="PRC_RimM"/>
    <property type="match status" value="1"/>
</dbReference>
<dbReference type="Pfam" id="PF01782">
    <property type="entry name" value="RimM"/>
    <property type="match status" value="1"/>
</dbReference>
<dbReference type="SUPFAM" id="SSF50346">
    <property type="entry name" value="PRC-barrel domain"/>
    <property type="match status" value="1"/>
</dbReference>
<dbReference type="SUPFAM" id="SSF50447">
    <property type="entry name" value="Translation proteins"/>
    <property type="match status" value="1"/>
</dbReference>
<reference key="1">
    <citation type="journal article" date="2009" name="PLoS Genet.">
        <title>Organised genome dynamics in the Escherichia coli species results in highly diverse adaptive paths.</title>
        <authorList>
            <person name="Touchon M."/>
            <person name="Hoede C."/>
            <person name="Tenaillon O."/>
            <person name="Barbe V."/>
            <person name="Baeriswyl S."/>
            <person name="Bidet P."/>
            <person name="Bingen E."/>
            <person name="Bonacorsi S."/>
            <person name="Bouchier C."/>
            <person name="Bouvet O."/>
            <person name="Calteau A."/>
            <person name="Chiapello H."/>
            <person name="Clermont O."/>
            <person name="Cruveiller S."/>
            <person name="Danchin A."/>
            <person name="Diard M."/>
            <person name="Dossat C."/>
            <person name="Karoui M.E."/>
            <person name="Frapy E."/>
            <person name="Garry L."/>
            <person name="Ghigo J.M."/>
            <person name="Gilles A.M."/>
            <person name="Johnson J."/>
            <person name="Le Bouguenec C."/>
            <person name="Lescat M."/>
            <person name="Mangenot S."/>
            <person name="Martinez-Jehanne V."/>
            <person name="Matic I."/>
            <person name="Nassif X."/>
            <person name="Oztas S."/>
            <person name="Petit M.A."/>
            <person name="Pichon C."/>
            <person name="Rouy Z."/>
            <person name="Ruf C.S."/>
            <person name="Schneider D."/>
            <person name="Tourret J."/>
            <person name="Vacherie B."/>
            <person name="Vallenet D."/>
            <person name="Medigue C."/>
            <person name="Rocha E.P.C."/>
            <person name="Denamur E."/>
        </authorList>
    </citation>
    <scope>NUCLEOTIDE SEQUENCE [LARGE SCALE GENOMIC DNA]</scope>
    <source>
        <strain>55989 / EAEC</strain>
    </source>
</reference>
<organism>
    <name type="scientific">Escherichia coli (strain 55989 / EAEC)</name>
    <dbReference type="NCBI Taxonomy" id="585055"/>
    <lineage>
        <taxon>Bacteria</taxon>
        <taxon>Pseudomonadati</taxon>
        <taxon>Pseudomonadota</taxon>
        <taxon>Gammaproteobacteria</taxon>
        <taxon>Enterobacterales</taxon>
        <taxon>Enterobacteriaceae</taxon>
        <taxon>Escherichia</taxon>
    </lineage>
</organism>
<feature type="chain" id="PRO_1000116566" description="Ribosome maturation factor RimM">
    <location>
        <begin position="1"/>
        <end position="182"/>
    </location>
</feature>
<feature type="domain" description="PRC barrel" evidence="1">
    <location>
        <begin position="102"/>
        <end position="182"/>
    </location>
</feature>
<accession>B7LDJ7</accession>
<evidence type="ECO:0000255" key="1">
    <source>
        <dbReference type="HAMAP-Rule" id="MF_00014"/>
    </source>
</evidence>
<comment type="function">
    <text evidence="1">An accessory protein needed during the final step in the assembly of 30S ribosomal subunit, possibly for assembly of the head region. Essential for efficient processing of 16S rRNA. May be needed both before and after RbfA during the maturation of 16S rRNA. It has affinity for free ribosomal 30S subunits but not for 70S ribosomes.</text>
</comment>
<comment type="subunit">
    <text evidence="1">Binds ribosomal protein uS19.</text>
</comment>
<comment type="subcellular location">
    <subcellularLocation>
        <location evidence="1">Cytoplasm</location>
    </subcellularLocation>
</comment>
<comment type="domain">
    <text evidence="1">The PRC barrel domain binds ribosomal protein uS19.</text>
</comment>
<comment type="similarity">
    <text evidence="1">Belongs to the RimM family.</text>
</comment>
<name>RIMM_ECO55</name>
<gene>
    <name evidence="1" type="primary">rimM</name>
    <name type="ordered locus">EC55989_2897</name>
</gene>
<proteinExistence type="inferred from homology"/>
<protein>
    <recommendedName>
        <fullName evidence="1">Ribosome maturation factor RimM</fullName>
    </recommendedName>
</protein>
<sequence length="182" mass="20605">MSKQLTAQAPVDPIVLGKMGSSYGIRGWLRVFSSTEDAESIFDYQPWFIQKAGQWQQVQLESWKHHNQDMIIKLKGVDDRDAANLLTNCEIVVDSSQLPQLEEGDYYWKDLMGCQVVTTEGYDLGKVVDMMETGSNDVLVIKANLKDAFGIKERLVPFLDGQVIKKVDLTTRSIEVDWDPGF</sequence>